<gene>
    <name evidence="1" type="primary">rbfA</name>
    <name type="ordered locus">Cagg_3680</name>
</gene>
<dbReference type="EMBL" id="CP001337">
    <property type="protein sequence ID" value="ACL26516.1"/>
    <property type="molecule type" value="Genomic_DNA"/>
</dbReference>
<dbReference type="RefSeq" id="WP_015942361.1">
    <property type="nucleotide sequence ID" value="NC_011831.1"/>
</dbReference>
<dbReference type="SMR" id="B8GAE1"/>
<dbReference type="STRING" id="326427.Cagg_3680"/>
<dbReference type="KEGG" id="cag:Cagg_3680"/>
<dbReference type="eggNOG" id="COG0858">
    <property type="taxonomic scope" value="Bacteria"/>
</dbReference>
<dbReference type="HOGENOM" id="CLU_089475_6_3_0"/>
<dbReference type="OrthoDB" id="307788at2"/>
<dbReference type="Proteomes" id="UP000002508">
    <property type="component" value="Chromosome"/>
</dbReference>
<dbReference type="GO" id="GO:0005829">
    <property type="term" value="C:cytosol"/>
    <property type="evidence" value="ECO:0007669"/>
    <property type="project" value="TreeGrafter"/>
</dbReference>
<dbReference type="GO" id="GO:0043024">
    <property type="term" value="F:ribosomal small subunit binding"/>
    <property type="evidence" value="ECO:0007669"/>
    <property type="project" value="TreeGrafter"/>
</dbReference>
<dbReference type="GO" id="GO:0030490">
    <property type="term" value="P:maturation of SSU-rRNA"/>
    <property type="evidence" value="ECO:0007669"/>
    <property type="project" value="UniProtKB-UniRule"/>
</dbReference>
<dbReference type="Gene3D" id="3.30.300.20">
    <property type="match status" value="1"/>
</dbReference>
<dbReference type="HAMAP" id="MF_00003">
    <property type="entry name" value="RbfA"/>
    <property type="match status" value="1"/>
</dbReference>
<dbReference type="InterPro" id="IPR015946">
    <property type="entry name" value="KH_dom-like_a/b"/>
</dbReference>
<dbReference type="InterPro" id="IPR000238">
    <property type="entry name" value="RbfA"/>
</dbReference>
<dbReference type="InterPro" id="IPR023799">
    <property type="entry name" value="RbfA_dom_sf"/>
</dbReference>
<dbReference type="NCBIfam" id="TIGR00082">
    <property type="entry name" value="rbfA"/>
    <property type="match status" value="1"/>
</dbReference>
<dbReference type="PANTHER" id="PTHR33515">
    <property type="entry name" value="RIBOSOME-BINDING FACTOR A, CHLOROPLASTIC-RELATED"/>
    <property type="match status" value="1"/>
</dbReference>
<dbReference type="PANTHER" id="PTHR33515:SF1">
    <property type="entry name" value="RIBOSOME-BINDING FACTOR A, CHLOROPLASTIC-RELATED"/>
    <property type="match status" value="1"/>
</dbReference>
<dbReference type="Pfam" id="PF02033">
    <property type="entry name" value="RBFA"/>
    <property type="match status" value="1"/>
</dbReference>
<dbReference type="SUPFAM" id="SSF89919">
    <property type="entry name" value="Ribosome-binding factor A, RbfA"/>
    <property type="match status" value="1"/>
</dbReference>
<keyword id="KW-0963">Cytoplasm</keyword>
<keyword id="KW-0690">Ribosome biogenesis</keyword>
<evidence type="ECO:0000255" key="1">
    <source>
        <dbReference type="HAMAP-Rule" id="MF_00003"/>
    </source>
</evidence>
<sequence>MAKQRLQQVADTMQRILGEVIQTELKDPRVGFASVTKVEVSADLQHAKVYISIMGTPEERATTMAALQRARGFLRKRVAEEMRHMRFIPELHLIEDTSIDYSLHINDVIRQIQHERMVNPPRIDDEQ</sequence>
<name>RBFA_CHLAD</name>
<comment type="function">
    <text evidence="1">One of several proteins that assist in the late maturation steps of the functional core of the 30S ribosomal subunit. Associates with free 30S ribosomal subunits (but not with 30S subunits that are part of 70S ribosomes or polysomes). Required for efficient processing of 16S rRNA. May interact with the 5'-terminal helix region of 16S rRNA.</text>
</comment>
<comment type="subunit">
    <text evidence="1">Monomer. Binds 30S ribosomal subunits, but not 50S ribosomal subunits or 70S ribosomes.</text>
</comment>
<comment type="subcellular location">
    <subcellularLocation>
        <location evidence="1">Cytoplasm</location>
    </subcellularLocation>
</comment>
<comment type="similarity">
    <text evidence="1">Belongs to the RbfA family.</text>
</comment>
<reference key="1">
    <citation type="submission" date="2008-12" db="EMBL/GenBank/DDBJ databases">
        <title>Complete sequence of Chloroflexus aggregans DSM 9485.</title>
        <authorList>
            <consortium name="US DOE Joint Genome Institute"/>
            <person name="Lucas S."/>
            <person name="Copeland A."/>
            <person name="Lapidus A."/>
            <person name="Glavina del Rio T."/>
            <person name="Dalin E."/>
            <person name="Tice H."/>
            <person name="Pitluck S."/>
            <person name="Foster B."/>
            <person name="Larimer F."/>
            <person name="Land M."/>
            <person name="Hauser L."/>
            <person name="Kyrpides N."/>
            <person name="Mikhailova N."/>
            <person name="Bryant D.A."/>
            <person name="Richardson P."/>
        </authorList>
    </citation>
    <scope>NUCLEOTIDE SEQUENCE [LARGE SCALE GENOMIC DNA]</scope>
    <source>
        <strain>MD-66 / DSM 9485</strain>
    </source>
</reference>
<accession>B8GAE1</accession>
<feature type="chain" id="PRO_1000193240" description="Ribosome-binding factor A">
    <location>
        <begin position="1"/>
        <end position="127"/>
    </location>
</feature>
<organism>
    <name type="scientific">Chloroflexus aggregans (strain MD-66 / DSM 9485)</name>
    <dbReference type="NCBI Taxonomy" id="326427"/>
    <lineage>
        <taxon>Bacteria</taxon>
        <taxon>Bacillati</taxon>
        <taxon>Chloroflexota</taxon>
        <taxon>Chloroflexia</taxon>
        <taxon>Chloroflexales</taxon>
        <taxon>Chloroflexineae</taxon>
        <taxon>Chloroflexaceae</taxon>
        <taxon>Chloroflexus</taxon>
    </lineage>
</organism>
<proteinExistence type="inferred from homology"/>
<protein>
    <recommendedName>
        <fullName evidence="1">Ribosome-binding factor A</fullName>
    </recommendedName>
</protein>